<reference key="1">
    <citation type="journal article" date="2007" name="Nature">
        <title>Evolution of genes and genomes on the Drosophila phylogeny.</title>
        <authorList>
            <consortium name="Drosophila 12 genomes consortium"/>
        </authorList>
    </citation>
    <scope>NUCLEOTIDE SEQUENCE [LARGE SCALE GENOMIC DNA]</scope>
    <source>
        <strain>Tucson 15081-1352.22</strain>
    </source>
</reference>
<name>FEN1_DROMO</name>
<accession>B4KNM1</accession>
<keyword id="KW-0227">DNA damage</keyword>
<keyword id="KW-0234">DNA repair</keyword>
<keyword id="KW-0235">DNA replication</keyword>
<keyword id="KW-0255">Endonuclease</keyword>
<keyword id="KW-0269">Exonuclease</keyword>
<keyword id="KW-0378">Hydrolase</keyword>
<keyword id="KW-0460">Magnesium</keyword>
<keyword id="KW-0479">Metal-binding</keyword>
<keyword id="KW-0496">Mitochondrion</keyword>
<keyword id="KW-0540">Nuclease</keyword>
<keyword id="KW-0539">Nucleus</keyword>
<keyword id="KW-0597">Phosphoprotein</keyword>
<keyword id="KW-1185">Reference proteome</keyword>
<dbReference type="EC" id="3.1.-.-" evidence="1"/>
<dbReference type="EMBL" id="CH933808">
    <property type="protein sequence ID" value="EDW10006.1"/>
    <property type="molecule type" value="Genomic_DNA"/>
</dbReference>
<dbReference type="SMR" id="B4KNM1"/>
<dbReference type="FunCoup" id="B4KNM1">
    <property type="interactions" value="2146"/>
</dbReference>
<dbReference type="EnsemblMetazoa" id="FBtr0169479">
    <property type="protein sequence ID" value="FBpp0167971"/>
    <property type="gene ID" value="FBgn0141493"/>
</dbReference>
<dbReference type="EnsemblMetazoa" id="XM_002006035.4">
    <property type="protein sequence ID" value="XP_002006071.1"/>
    <property type="gene ID" value="LOC6580214"/>
</dbReference>
<dbReference type="GeneID" id="6580214"/>
<dbReference type="KEGG" id="dmo:Dmoj_GI18754"/>
<dbReference type="CTD" id="2237"/>
<dbReference type="eggNOG" id="KOG2519">
    <property type="taxonomic scope" value="Eukaryota"/>
</dbReference>
<dbReference type="HOGENOM" id="CLU_032444_2_0_1"/>
<dbReference type="InParanoid" id="B4KNM1"/>
<dbReference type="OMA" id="MGIPWVQ"/>
<dbReference type="OrthoDB" id="1937206at2759"/>
<dbReference type="PhylomeDB" id="B4KNM1"/>
<dbReference type="Proteomes" id="UP000009192">
    <property type="component" value="Unassembled WGS sequence"/>
</dbReference>
<dbReference type="GO" id="GO:0005739">
    <property type="term" value="C:mitochondrion"/>
    <property type="evidence" value="ECO:0007669"/>
    <property type="project" value="UniProtKB-SubCell"/>
</dbReference>
<dbReference type="GO" id="GO:0005730">
    <property type="term" value="C:nucleolus"/>
    <property type="evidence" value="ECO:0007669"/>
    <property type="project" value="UniProtKB-SubCell"/>
</dbReference>
<dbReference type="GO" id="GO:0005654">
    <property type="term" value="C:nucleoplasm"/>
    <property type="evidence" value="ECO:0007669"/>
    <property type="project" value="UniProtKB-SubCell"/>
</dbReference>
<dbReference type="GO" id="GO:0008409">
    <property type="term" value="F:5'-3' exonuclease activity"/>
    <property type="evidence" value="ECO:0007669"/>
    <property type="project" value="UniProtKB-UniRule"/>
</dbReference>
<dbReference type="GO" id="GO:0017108">
    <property type="term" value="F:5'-flap endonuclease activity"/>
    <property type="evidence" value="ECO:0007669"/>
    <property type="project" value="UniProtKB-UniRule"/>
</dbReference>
<dbReference type="GO" id="GO:0003677">
    <property type="term" value="F:DNA binding"/>
    <property type="evidence" value="ECO:0007669"/>
    <property type="project" value="UniProtKB-UniRule"/>
</dbReference>
<dbReference type="GO" id="GO:0000287">
    <property type="term" value="F:magnesium ion binding"/>
    <property type="evidence" value="ECO:0007669"/>
    <property type="project" value="UniProtKB-UniRule"/>
</dbReference>
<dbReference type="GO" id="GO:0030145">
    <property type="term" value="F:manganese ion binding"/>
    <property type="evidence" value="ECO:0007669"/>
    <property type="project" value="TreeGrafter"/>
</dbReference>
<dbReference type="GO" id="GO:0004523">
    <property type="term" value="F:RNA-DNA hybrid ribonuclease activity"/>
    <property type="evidence" value="ECO:0007669"/>
    <property type="project" value="TreeGrafter"/>
</dbReference>
<dbReference type="GO" id="GO:0006284">
    <property type="term" value="P:base-excision repair"/>
    <property type="evidence" value="ECO:0007669"/>
    <property type="project" value="UniProtKB-UniRule"/>
</dbReference>
<dbReference type="GO" id="GO:0043137">
    <property type="term" value="P:DNA replication, removal of RNA primer"/>
    <property type="evidence" value="ECO:0007669"/>
    <property type="project" value="UniProtKB-UniRule"/>
</dbReference>
<dbReference type="CDD" id="cd09867">
    <property type="entry name" value="PIN_FEN1"/>
    <property type="match status" value="1"/>
</dbReference>
<dbReference type="FunFam" id="1.10.150.20:FF:000009">
    <property type="entry name" value="Flap endonuclease 1"/>
    <property type="match status" value="1"/>
</dbReference>
<dbReference type="FunFam" id="3.40.50.1010:FF:000003">
    <property type="entry name" value="Flap endonuclease 1"/>
    <property type="match status" value="1"/>
</dbReference>
<dbReference type="Gene3D" id="1.10.150.20">
    <property type="entry name" value="5' to 3' exonuclease, C-terminal subdomain"/>
    <property type="match status" value="1"/>
</dbReference>
<dbReference type="Gene3D" id="3.40.50.1010">
    <property type="entry name" value="5'-nuclease"/>
    <property type="match status" value="1"/>
</dbReference>
<dbReference type="HAMAP" id="MF_00614">
    <property type="entry name" value="Fen"/>
    <property type="match status" value="1"/>
</dbReference>
<dbReference type="InterPro" id="IPR036279">
    <property type="entry name" value="5-3_exonuclease_C_sf"/>
</dbReference>
<dbReference type="InterPro" id="IPR023426">
    <property type="entry name" value="Flap_endonuc"/>
</dbReference>
<dbReference type="InterPro" id="IPR008918">
    <property type="entry name" value="HhH2"/>
</dbReference>
<dbReference type="InterPro" id="IPR029060">
    <property type="entry name" value="PIN-like_dom_sf"/>
</dbReference>
<dbReference type="InterPro" id="IPR006086">
    <property type="entry name" value="XPG-I_dom"/>
</dbReference>
<dbReference type="InterPro" id="IPR006084">
    <property type="entry name" value="XPG/Rad2"/>
</dbReference>
<dbReference type="InterPro" id="IPR019974">
    <property type="entry name" value="XPG_CS"/>
</dbReference>
<dbReference type="InterPro" id="IPR006085">
    <property type="entry name" value="XPG_DNA_repair_N"/>
</dbReference>
<dbReference type="PANTHER" id="PTHR11081:SF9">
    <property type="entry name" value="FLAP ENDONUCLEASE 1"/>
    <property type="match status" value="1"/>
</dbReference>
<dbReference type="PANTHER" id="PTHR11081">
    <property type="entry name" value="FLAP ENDONUCLEASE FAMILY MEMBER"/>
    <property type="match status" value="1"/>
</dbReference>
<dbReference type="Pfam" id="PF00867">
    <property type="entry name" value="XPG_I"/>
    <property type="match status" value="1"/>
</dbReference>
<dbReference type="Pfam" id="PF00752">
    <property type="entry name" value="XPG_N"/>
    <property type="match status" value="1"/>
</dbReference>
<dbReference type="PRINTS" id="PR00853">
    <property type="entry name" value="XPGRADSUPER"/>
</dbReference>
<dbReference type="SMART" id="SM00279">
    <property type="entry name" value="HhH2"/>
    <property type="match status" value="1"/>
</dbReference>
<dbReference type="SMART" id="SM00484">
    <property type="entry name" value="XPGI"/>
    <property type="match status" value="1"/>
</dbReference>
<dbReference type="SMART" id="SM00485">
    <property type="entry name" value="XPGN"/>
    <property type="match status" value="1"/>
</dbReference>
<dbReference type="SUPFAM" id="SSF47807">
    <property type="entry name" value="5' to 3' exonuclease, C-terminal subdomain"/>
    <property type="match status" value="1"/>
</dbReference>
<dbReference type="SUPFAM" id="SSF88723">
    <property type="entry name" value="PIN domain-like"/>
    <property type="match status" value="1"/>
</dbReference>
<dbReference type="PROSITE" id="PS00841">
    <property type="entry name" value="XPG_1"/>
    <property type="match status" value="1"/>
</dbReference>
<dbReference type="PROSITE" id="PS00842">
    <property type="entry name" value="XPG_2"/>
    <property type="match status" value="1"/>
</dbReference>
<gene>
    <name evidence="1" type="primary">Fen1</name>
    <name type="ORF">GI18754</name>
</gene>
<organism>
    <name type="scientific">Drosophila mojavensis</name>
    <name type="common">Fruit fly</name>
    <dbReference type="NCBI Taxonomy" id="7230"/>
    <lineage>
        <taxon>Eukaryota</taxon>
        <taxon>Metazoa</taxon>
        <taxon>Ecdysozoa</taxon>
        <taxon>Arthropoda</taxon>
        <taxon>Hexapoda</taxon>
        <taxon>Insecta</taxon>
        <taxon>Pterygota</taxon>
        <taxon>Neoptera</taxon>
        <taxon>Endopterygota</taxon>
        <taxon>Diptera</taxon>
        <taxon>Brachycera</taxon>
        <taxon>Muscomorpha</taxon>
        <taxon>Ephydroidea</taxon>
        <taxon>Drosophilidae</taxon>
        <taxon>Drosophila</taxon>
    </lineage>
</organism>
<evidence type="ECO:0000255" key="1">
    <source>
        <dbReference type="HAMAP-Rule" id="MF_03140"/>
    </source>
</evidence>
<evidence type="ECO:0000256" key="2">
    <source>
        <dbReference type="SAM" id="MobiDB-lite"/>
    </source>
</evidence>
<sequence>MGILGLSKLIADLAPLAIRESEIKNFFGRKVAIDASMCLYQFLIAVRSEGAQLATVNGDPTSHLMGMFYRTIRLLDNGIKPVYVFDGKPPDLKAGELAKRAERREEAEKALKVATDAGDEAEIEKFNRRLVRVTKEHSNEAKELLKLMGVPYVDAPCEAEAQCAALVKAGKVYATATEDMDALTFGSCKLLRYLTYSEARKMPVKEFSYDKVLQGLELTSKEFIDLCILMGCDYCDSIKGIGPKRAIELIKTYRDIETILENIDTSKYIVPENWNYQRARELFVEPEVTDASTIDLKWTAPDEDGLVQFLCGDRQFNEERVRNGARKLLKSKQSQTQVRLDSFFKALPSSPNATAAAKRKAEEIKKSANNKKAKTSGGSGAARGRRPK</sequence>
<protein>
    <recommendedName>
        <fullName evidence="1">Flap endonuclease 1</fullName>
        <shortName evidence="1">FEN-1</shortName>
        <ecNumber evidence="1">3.1.-.-</ecNumber>
    </recommendedName>
    <alternativeName>
        <fullName evidence="1">Flap structure-specific endonuclease 1</fullName>
    </alternativeName>
</protein>
<feature type="chain" id="PRO_0000403501" description="Flap endonuclease 1">
    <location>
        <begin position="1"/>
        <end position="388"/>
    </location>
</feature>
<feature type="region of interest" description="N-domain">
    <location>
        <begin position="1"/>
        <end position="104"/>
    </location>
</feature>
<feature type="region of interest" description="I-domain">
    <location>
        <begin position="122"/>
        <end position="253"/>
    </location>
</feature>
<feature type="region of interest" description="Interaction with PCNA" evidence="1">
    <location>
        <begin position="336"/>
        <end position="344"/>
    </location>
</feature>
<feature type="region of interest" description="Disordered" evidence="2">
    <location>
        <begin position="351"/>
        <end position="388"/>
    </location>
</feature>
<feature type="binding site" evidence="1">
    <location>
        <position position="34"/>
    </location>
    <ligand>
        <name>Mg(2+)</name>
        <dbReference type="ChEBI" id="CHEBI:18420"/>
        <label>1</label>
    </ligand>
</feature>
<feature type="binding site" evidence="1">
    <location>
        <position position="47"/>
    </location>
    <ligand>
        <name>DNA</name>
        <dbReference type="ChEBI" id="CHEBI:16991"/>
    </ligand>
</feature>
<feature type="binding site" evidence="1">
    <location>
        <position position="70"/>
    </location>
    <ligand>
        <name>DNA</name>
        <dbReference type="ChEBI" id="CHEBI:16991"/>
    </ligand>
</feature>
<feature type="binding site" evidence="1">
    <location>
        <position position="86"/>
    </location>
    <ligand>
        <name>Mg(2+)</name>
        <dbReference type="ChEBI" id="CHEBI:18420"/>
        <label>1</label>
    </ligand>
</feature>
<feature type="binding site" evidence="1">
    <location>
        <position position="158"/>
    </location>
    <ligand>
        <name>DNA</name>
        <dbReference type="ChEBI" id="CHEBI:16991"/>
    </ligand>
</feature>
<feature type="binding site" evidence="1">
    <location>
        <position position="158"/>
    </location>
    <ligand>
        <name>Mg(2+)</name>
        <dbReference type="ChEBI" id="CHEBI:18420"/>
        <label>1</label>
    </ligand>
</feature>
<feature type="binding site" evidence="1">
    <location>
        <position position="160"/>
    </location>
    <ligand>
        <name>Mg(2+)</name>
        <dbReference type="ChEBI" id="CHEBI:18420"/>
        <label>1</label>
    </ligand>
</feature>
<feature type="binding site" evidence="1">
    <location>
        <position position="179"/>
    </location>
    <ligand>
        <name>Mg(2+)</name>
        <dbReference type="ChEBI" id="CHEBI:18420"/>
        <label>2</label>
    </ligand>
</feature>
<feature type="binding site" evidence="1">
    <location>
        <position position="181"/>
    </location>
    <ligand>
        <name>Mg(2+)</name>
        <dbReference type="ChEBI" id="CHEBI:18420"/>
        <label>2</label>
    </ligand>
</feature>
<feature type="binding site" evidence="1">
    <location>
        <position position="231"/>
    </location>
    <ligand>
        <name>DNA</name>
        <dbReference type="ChEBI" id="CHEBI:16991"/>
    </ligand>
</feature>
<feature type="binding site" evidence="1">
    <location>
        <position position="233"/>
    </location>
    <ligand>
        <name>DNA</name>
        <dbReference type="ChEBI" id="CHEBI:16991"/>
    </ligand>
</feature>
<feature type="binding site" evidence="1">
    <location>
        <position position="233"/>
    </location>
    <ligand>
        <name>Mg(2+)</name>
        <dbReference type="ChEBI" id="CHEBI:18420"/>
        <label>2</label>
    </ligand>
</feature>
<proteinExistence type="inferred from homology"/>
<comment type="function">
    <text evidence="1">Structure-specific nuclease with 5'-flap endonuclease and 5'-3' exonuclease activities involved in DNA replication and repair. During DNA replication, cleaves the 5'-overhanging flap structure that is generated by displacement synthesis when DNA polymerase encounters the 5'-end of a downstream Okazaki fragment. It enters the flap from the 5'-end and then tracks to cleave the flap base, leaving a nick for ligation. Also involved in the long patch base excision repair (LP-BER) pathway, by cleaving within the apurinic/apyrimidinic (AP) site-terminated flap. Acts as a genome stabilization factor that prevents flaps from equilibrating into structures that lead to duplications and deletions. Also possesses 5'-3' exonuclease activity on nicked or gapped double-stranded DNA, and exhibits RNase H activity. Also involved in replication and repair of rDNA and in repairing mitochondrial DNA.</text>
</comment>
<comment type="cofactor">
    <cofactor evidence="1">
        <name>Mg(2+)</name>
        <dbReference type="ChEBI" id="CHEBI:18420"/>
    </cofactor>
    <text evidence="1">Binds 2 magnesium ions per subunit. They probably participate in the reaction catalyzed by the enzyme. May bind an additional third magnesium ion after substrate binding.</text>
</comment>
<comment type="subunit">
    <text evidence="1">Interacts with PCNA. Three molecules of FEN1 bind to one PCNA trimer with each molecule binding to one PCNA monomer. PCNA stimulates the nuclease activity without altering cleavage specificity.</text>
</comment>
<comment type="subcellular location">
    <subcellularLocation>
        <location evidence="1">Nucleus</location>
        <location evidence="1">Nucleolus</location>
    </subcellularLocation>
    <subcellularLocation>
        <location evidence="1">Nucleus</location>
        <location evidence="1">Nucleoplasm</location>
    </subcellularLocation>
    <subcellularLocation>
        <location evidence="1">Mitochondrion</location>
    </subcellularLocation>
    <text evidence="1">Resides mostly in the nucleoli and relocalizes to the nucleoplasm upon DNA damage.</text>
</comment>
<comment type="PTM">
    <text evidence="1">Phosphorylated. Phosphorylation upon DNA damage induces relocalization to the nuclear plasma.</text>
</comment>
<comment type="similarity">
    <text evidence="1">Belongs to the XPG/RAD2 endonuclease family. FEN1 subfamily.</text>
</comment>